<organism>
    <name type="scientific">Saccharomyces cerevisiae (strain ATCC 204508 / S288c)</name>
    <name type="common">Baker's yeast</name>
    <dbReference type="NCBI Taxonomy" id="559292"/>
    <lineage>
        <taxon>Eukaryota</taxon>
        <taxon>Fungi</taxon>
        <taxon>Dikarya</taxon>
        <taxon>Ascomycota</taxon>
        <taxon>Saccharomycotina</taxon>
        <taxon>Saccharomycetes</taxon>
        <taxon>Saccharomycetales</taxon>
        <taxon>Saccharomycetaceae</taxon>
        <taxon>Saccharomyces</taxon>
    </lineage>
</organism>
<proteinExistence type="evidence at protein level"/>
<reference key="1">
    <citation type="journal article" date="1997" name="Yeast">
        <title>Sequence and analysis of a 36.2 kb fragment from the right arm of yeast chromosome XV reveals 19 open reading frames including SNF2 (5' end), CPA1, SLY41, a putative transport ATPase, a putative ribosomal protein and an SNF2 homologue.</title>
        <authorList>
            <person name="Poirey R."/>
            <person name="Cziepluch C."/>
            <person name="Tobiasch E."/>
            <person name="Pujol A."/>
            <person name="Kordes E."/>
            <person name="Jauniaux J.-C."/>
        </authorList>
    </citation>
    <scope>NUCLEOTIDE SEQUENCE [GENOMIC DNA]</scope>
    <source>
        <strain>ATCC 96604 / S288c / FY1679</strain>
    </source>
</reference>
<reference key="2">
    <citation type="journal article" date="1997" name="Nature">
        <title>The nucleotide sequence of Saccharomyces cerevisiae chromosome XV.</title>
        <authorList>
            <person name="Dujon B."/>
            <person name="Albermann K."/>
            <person name="Aldea M."/>
            <person name="Alexandraki D."/>
            <person name="Ansorge W."/>
            <person name="Arino J."/>
            <person name="Benes V."/>
            <person name="Bohn C."/>
            <person name="Bolotin-Fukuhara M."/>
            <person name="Bordonne R."/>
            <person name="Boyer J."/>
            <person name="Camasses A."/>
            <person name="Casamayor A."/>
            <person name="Casas C."/>
            <person name="Cheret G."/>
            <person name="Cziepluch C."/>
            <person name="Daignan-Fornier B."/>
            <person name="Dang V.-D."/>
            <person name="de Haan M."/>
            <person name="Delius H."/>
            <person name="Durand P."/>
            <person name="Fairhead C."/>
            <person name="Feldmann H."/>
            <person name="Gaillon L."/>
            <person name="Galisson F."/>
            <person name="Gamo F.-J."/>
            <person name="Gancedo C."/>
            <person name="Goffeau A."/>
            <person name="Goulding S.E."/>
            <person name="Grivell L.A."/>
            <person name="Habbig B."/>
            <person name="Hand N.J."/>
            <person name="Hani J."/>
            <person name="Hattenhorst U."/>
            <person name="Hebling U."/>
            <person name="Hernando Y."/>
            <person name="Herrero E."/>
            <person name="Heumann K."/>
            <person name="Hiesel R."/>
            <person name="Hilger F."/>
            <person name="Hofmann B."/>
            <person name="Hollenberg C.P."/>
            <person name="Hughes B."/>
            <person name="Jauniaux J.-C."/>
            <person name="Kalogeropoulos A."/>
            <person name="Katsoulou C."/>
            <person name="Kordes E."/>
            <person name="Lafuente M.J."/>
            <person name="Landt O."/>
            <person name="Louis E.J."/>
            <person name="Maarse A.C."/>
            <person name="Madania A."/>
            <person name="Mannhaupt G."/>
            <person name="Marck C."/>
            <person name="Martin R.P."/>
            <person name="Mewes H.-W."/>
            <person name="Michaux G."/>
            <person name="Paces V."/>
            <person name="Parle-McDermott A.G."/>
            <person name="Pearson B.M."/>
            <person name="Perrin A."/>
            <person name="Pettersson B."/>
            <person name="Poch O."/>
            <person name="Pohl T.M."/>
            <person name="Poirey R."/>
            <person name="Portetelle D."/>
            <person name="Pujol A."/>
            <person name="Purnelle B."/>
            <person name="Ramezani Rad M."/>
            <person name="Rechmann S."/>
            <person name="Schwager C."/>
            <person name="Schweizer M."/>
            <person name="Sor F."/>
            <person name="Sterky F."/>
            <person name="Tarassov I.A."/>
            <person name="Teodoru C."/>
            <person name="Tettelin H."/>
            <person name="Thierry A."/>
            <person name="Tobiasch E."/>
            <person name="Tzermia M."/>
            <person name="Uhlen M."/>
            <person name="Unseld M."/>
            <person name="Valens M."/>
            <person name="Vandenbol M."/>
            <person name="Vetter I."/>
            <person name="Vlcek C."/>
            <person name="Voet M."/>
            <person name="Volckaert G."/>
            <person name="Voss H."/>
            <person name="Wambutt R."/>
            <person name="Wedler H."/>
            <person name="Wiemann S."/>
            <person name="Winsor B."/>
            <person name="Wolfe K.H."/>
            <person name="Zollner A."/>
            <person name="Zumstein E."/>
            <person name="Kleine K."/>
        </authorList>
    </citation>
    <scope>NUCLEOTIDE SEQUENCE [LARGE SCALE GENOMIC DNA]</scope>
    <source>
        <strain>ATCC 204508 / S288c</strain>
    </source>
</reference>
<reference key="3">
    <citation type="journal article" date="2014" name="G3 (Bethesda)">
        <title>The reference genome sequence of Saccharomyces cerevisiae: Then and now.</title>
        <authorList>
            <person name="Engel S.R."/>
            <person name="Dietrich F.S."/>
            <person name="Fisk D.G."/>
            <person name="Binkley G."/>
            <person name="Balakrishnan R."/>
            <person name="Costanzo M.C."/>
            <person name="Dwight S.S."/>
            <person name="Hitz B.C."/>
            <person name="Karra K."/>
            <person name="Nash R.S."/>
            <person name="Weng S."/>
            <person name="Wong E.D."/>
            <person name="Lloyd P."/>
            <person name="Skrzypek M.S."/>
            <person name="Miyasato S.R."/>
            <person name="Simison M."/>
            <person name="Cherry J.M."/>
        </authorList>
    </citation>
    <scope>GENOME REANNOTATION</scope>
    <source>
        <strain>ATCC 204508 / S288c</strain>
    </source>
</reference>
<reference key="4">
    <citation type="journal article" date="1998" name="Yeast">
        <title>The list of cytoplasmic ribosomal proteins of Saccharomyces cerevisiae.</title>
        <authorList>
            <person name="Planta R.J."/>
            <person name="Mager W.H."/>
        </authorList>
    </citation>
    <scope>NOMENCLATURE</scope>
    <scope>SUBUNIT</scope>
</reference>
<reference key="5">
    <citation type="journal article" date="1999" name="J. Biol. Chem.">
        <title>The action of N-terminal acetyltransferases on yeast ribosomal proteins.</title>
        <authorList>
            <person name="Arnold R.J."/>
            <person name="Polevoda B."/>
            <person name="Reilly J.P."/>
            <person name="Sherman F."/>
        </authorList>
    </citation>
    <scope>ANALYSIS OF N-TERMINUS</scope>
</reference>
<reference key="6">
    <citation type="journal article" date="2003" name="Nature">
        <title>Global analysis of protein expression in yeast.</title>
        <authorList>
            <person name="Ghaemmaghami S."/>
            <person name="Huh W.-K."/>
            <person name="Bower K."/>
            <person name="Howson R.W."/>
            <person name="Belle A."/>
            <person name="Dephoure N."/>
            <person name="O'Shea E.K."/>
            <person name="Weissman J.S."/>
        </authorList>
    </citation>
    <scope>LEVEL OF PROTEIN EXPRESSION [LARGE SCALE ANALYSIS]</scope>
</reference>
<reference key="7">
    <citation type="journal article" date="2012" name="Proc. Natl. Acad. Sci. U.S.A.">
        <title>N-terminal acetylome analyses and functional insights of the N-terminal acetyltransferase NatB.</title>
        <authorList>
            <person name="Van Damme P."/>
            <person name="Lasa M."/>
            <person name="Polevoda B."/>
            <person name="Gazquez C."/>
            <person name="Elosegui-Artola A."/>
            <person name="Kim D.S."/>
            <person name="De Juan-Pardo E."/>
            <person name="Demeyer K."/>
            <person name="Hole K."/>
            <person name="Larrea E."/>
            <person name="Timmerman E."/>
            <person name="Prieto J."/>
            <person name="Arnesen T."/>
            <person name="Sherman F."/>
            <person name="Gevaert K."/>
            <person name="Aldabe R."/>
        </authorList>
    </citation>
    <scope>IDENTIFICATION BY MASS SPECTROMETRY [LARGE SCALE ANALYSIS]</scope>
</reference>
<reference key="8">
    <citation type="journal article" date="2014" name="Curr. Opin. Struct. Biol.">
        <title>A new system for naming ribosomal proteins.</title>
        <authorList>
            <person name="Ban N."/>
            <person name="Beckmann R."/>
            <person name="Cate J.H.D."/>
            <person name="Dinman J.D."/>
            <person name="Dragon F."/>
            <person name="Ellis S.R."/>
            <person name="Lafontaine D.L.J."/>
            <person name="Lindahl L."/>
            <person name="Liljas A."/>
            <person name="Lipton J.M."/>
            <person name="McAlear M.A."/>
            <person name="Moore P.B."/>
            <person name="Noller H.F."/>
            <person name="Ortega J."/>
            <person name="Panse V.G."/>
            <person name="Ramakrishnan V."/>
            <person name="Spahn C.M.T."/>
            <person name="Steitz T.A."/>
            <person name="Tchorzewski M."/>
            <person name="Tollervey D."/>
            <person name="Warren A.J."/>
            <person name="Williamson J.R."/>
            <person name="Wilson D."/>
            <person name="Yonath A."/>
            <person name="Yusupov M."/>
        </authorList>
    </citation>
    <scope>NOMENCLATURE</scope>
</reference>
<reference key="9">
    <citation type="journal article" date="2015" name="Biochem. J.">
        <title>Gcn1 contacts the small ribosomal protein Rps10, which is required for full activation of the protein kinase Gcn2.</title>
        <authorList>
            <person name="Lee S.J."/>
            <person name="Swanson M.J."/>
            <person name="Sattlegger E."/>
        </authorList>
    </citation>
    <scope>FUNCTION</scope>
    <scope>INTERACTION WITH GCN1</scope>
</reference>
<reference key="10">
    <citation type="journal article" date="2011" name="Science">
        <title>The structure of the eukaryotic ribosome at 3.0 A resolution.</title>
        <authorList>
            <person name="Ben-Shem A."/>
            <person name="Garreau de Loubresse N."/>
            <person name="Melnikov S."/>
            <person name="Jenner L."/>
            <person name="Yusupova G."/>
            <person name="Yusupov M."/>
        </authorList>
    </citation>
    <scope>X-RAY CRYSTALLOGRAPHY (3.00 ANGSTROMS) OF 80S RIBOSOME</scope>
    <scope>SUBUNIT</scope>
    <scope>SUBCELLULAR LOCATION</scope>
</reference>
<keyword id="KW-0002">3D-structure</keyword>
<keyword id="KW-0963">Cytoplasm</keyword>
<keyword id="KW-1185">Reference proteome</keyword>
<keyword id="KW-0687">Ribonucleoprotein</keyword>
<keyword id="KW-0689">Ribosomal protein</keyword>
<sequence length="105" mass="12739">MLMPKEDRNKIHQYLFQEGVVVAKKDFNQAKHEEIDTKNLYVIKALQSLTSKGYVKTQFSWQYYYYTLTEEGVEYLREYLNLPEHIVPGTYIQERNPTQRPQRRY</sequence>
<protein>
    <recommendedName>
        <fullName evidence="5">Small ribosomal subunit protein eS10A</fullName>
    </recommendedName>
    <alternativeName>
        <fullName evidence="6">40S ribosomal protein S10-A</fullName>
    </alternativeName>
</protein>
<feature type="chain" id="PRO_0000116376" description="Small ribosomal subunit protein eS10A">
    <location>
        <begin position="1"/>
        <end position="105"/>
    </location>
</feature>
<feature type="helix" evidence="10">
    <location>
        <begin position="5"/>
        <end position="18"/>
    </location>
</feature>
<feature type="strand" evidence="10">
    <location>
        <begin position="19"/>
        <end position="21"/>
    </location>
</feature>
<feature type="strand" evidence="10">
    <location>
        <begin position="33"/>
        <end position="37"/>
    </location>
</feature>
<feature type="helix" evidence="10">
    <location>
        <begin position="39"/>
        <end position="52"/>
    </location>
</feature>
<feature type="strand" evidence="10">
    <location>
        <begin position="53"/>
        <end position="59"/>
    </location>
</feature>
<feature type="turn" evidence="11">
    <location>
        <begin position="60"/>
        <end position="63"/>
    </location>
</feature>
<feature type="strand" evidence="10">
    <location>
        <begin position="64"/>
        <end position="68"/>
    </location>
</feature>
<feature type="helix" evidence="10">
    <location>
        <begin position="70"/>
        <end position="80"/>
    </location>
</feature>
<feature type="turn" evidence="11">
    <location>
        <begin position="88"/>
        <end position="90"/>
    </location>
</feature>
<evidence type="ECO:0000269" key="1">
    <source>
    </source>
</evidence>
<evidence type="ECO:0000269" key="2">
    <source>
    </source>
</evidence>
<evidence type="ECO:0000269" key="3">
    <source>
    </source>
</evidence>
<evidence type="ECO:0000269" key="4">
    <source>
    </source>
</evidence>
<evidence type="ECO:0000303" key="5">
    <source>
    </source>
</evidence>
<evidence type="ECO:0000303" key="6">
    <source>
    </source>
</evidence>
<evidence type="ECO:0000305" key="7"/>
<evidence type="ECO:0000305" key="8">
    <source>
    </source>
</evidence>
<evidence type="ECO:0000305" key="9">
    <source>
    </source>
</evidence>
<evidence type="ECO:0007829" key="10">
    <source>
        <dbReference type="PDB" id="6ZVI"/>
    </source>
</evidence>
<evidence type="ECO:0007829" key="11">
    <source>
        <dbReference type="PDB" id="7A1G"/>
    </source>
</evidence>
<comment type="function">
    <text evidence="4 8">Component of the ribosome, a large ribonucleoprotein complex responsible for the synthesis of proteins in the cell. The small ribosomal subunit (SSU) binds messenger RNAs (mRNAs) and translates the encoded message by selecting cognate aminoacyl-transfer RNA (tRNA) molecules. The large subunit (LSU) contains the ribosomal catalytic site termed the peptidyl transferase center (PTC), which catalyzes the formation of peptide bonds, thereby polymerizing the amino acids delivered by tRNAs into a polypeptide chain. The nascent polypeptides leave the ribosome through a tunnel in the LSU and interact with protein factors that function in enzymatic processing, targeting, and the membrane insertion of nascent chains at the exit of the ribosomal tunnel (PubMed:22096102). eS10 plays a role as a positive regulator of the GCN2 kinase activity by stimulating GCN1-mediated GCN2 activation (PubMed:25437641).</text>
</comment>
<comment type="subunit">
    <text evidence="3 4 9">Component of the small ribosomal subunit (SSU). Mature yeast ribosomes consist of a small (40S) and a large (60S) subunit. The 40S small subunit contains 1 molecule of ribosomal RNA (18S rRNA) and 33 different proteins (encoded by 57 genes). The large 60S subunit contains 3 rRNA molecules (25S, 5.8S and 5S rRNA) and 46 different proteins (encoded by 81 genes) (PubMed:22096102, PubMed:9559554). eS10 interacts with GCN1 (via middle region); this interaction is direct and promotes GCN2 kinase activity (PubMed:25437641).</text>
</comment>
<comment type="subcellular location">
    <subcellularLocation>
        <location evidence="3">Cytoplasm</location>
    </subcellularLocation>
</comment>
<comment type="PTM">
    <text evidence="1">The N-terminus is not modified.</text>
</comment>
<comment type="miscellaneous">
    <text evidence="2">Present with 54100 molecules/cell in log phase SD medium.</text>
</comment>
<comment type="miscellaneous">
    <text evidence="7">There are 2 genes for eS10 in yeast.</text>
</comment>
<comment type="similarity">
    <text evidence="7">Belongs to the eukaryotic ribosomal protein eS10 family.</text>
</comment>
<accession>Q08745</accession>
<accession>D6W2Z1</accession>
<gene>
    <name evidence="6" type="primary">RPS10A</name>
    <name type="ordered locus">YOR293W</name>
</gene>
<dbReference type="EMBL" id="Z75201">
    <property type="protein sequence ID" value="CAA99521.1"/>
    <property type="molecule type" value="Genomic_DNA"/>
</dbReference>
<dbReference type="EMBL" id="BK006948">
    <property type="protein sequence ID" value="DAA11057.1"/>
    <property type="molecule type" value="Genomic_DNA"/>
</dbReference>
<dbReference type="PIR" id="S67197">
    <property type="entry name" value="S67197"/>
</dbReference>
<dbReference type="RefSeq" id="NP_014936.1">
    <property type="nucleotide sequence ID" value="NM_001183712.1"/>
</dbReference>
<dbReference type="PDB" id="3J6X">
    <property type="method" value="EM"/>
    <property type="resolution" value="6.10 A"/>
    <property type="chains" value="10=1-105"/>
</dbReference>
<dbReference type="PDB" id="3J6Y">
    <property type="method" value="EM"/>
    <property type="resolution" value="6.10 A"/>
    <property type="chains" value="10=1-105"/>
</dbReference>
<dbReference type="PDB" id="3J77">
    <property type="method" value="EM"/>
    <property type="resolution" value="6.20 A"/>
    <property type="chains" value="10=1-105"/>
</dbReference>
<dbReference type="PDB" id="3J78">
    <property type="method" value="EM"/>
    <property type="resolution" value="6.30 A"/>
    <property type="chains" value="10=1-105"/>
</dbReference>
<dbReference type="PDB" id="4U3N">
    <property type="method" value="X-ray"/>
    <property type="resolution" value="3.20 A"/>
    <property type="chains" value="C0/c0=1-105"/>
</dbReference>
<dbReference type="PDB" id="4U3U">
    <property type="method" value="X-ray"/>
    <property type="resolution" value="2.90 A"/>
    <property type="chains" value="C0/c0=1-105"/>
</dbReference>
<dbReference type="PDB" id="4U4N">
    <property type="method" value="X-ray"/>
    <property type="resolution" value="3.10 A"/>
    <property type="chains" value="C0/c0=1-105"/>
</dbReference>
<dbReference type="PDB" id="4U4O">
    <property type="method" value="X-ray"/>
    <property type="resolution" value="3.60 A"/>
    <property type="chains" value="C0/c0=1-105"/>
</dbReference>
<dbReference type="PDB" id="4U4Q">
    <property type="method" value="X-ray"/>
    <property type="resolution" value="3.00 A"/>
    <property type="chains" value="C0/c0=1-105"/>
</dbReference>
<dbReference type="PDB" id="4U4R">
    <property type="method" value="X-ray"/>
    <property type="resolution" value="2.80 A"/>
    <property type="chains" value="C0/c0=1-105"/>
</dbReference>
<dbReference type="PDB" id="4U4U">
    <property type="method" value="X-ray"/>
    <property type="resolution" value="3.00 A"/>
    <property type="chains" value="C0/c0=1-105"/>
</dbReference>
<dbReference type="PDB" id="4U4Y">
    <property type="method" value="X-ray"/>
    <property type="resolution" value="3.20 A"/>
    <property type="chains" value="C0/c0=1-105"/>
</dbReference>
<dbReference type="PDB" id="4U4Z">
    <property type="method" value="X-ray"/>
    <property type="resolution" value="3.10 A"/>
    <property type="chains" value="C0/c0=1-105"/>
</dbReference>
<dbReference type="PDB" id="4U50">
    <property type="method" value="X-ray"/>
    <property type="resolution" value="3.20 A"/>
    <property type="chains" value="C0/c0=1-105"/>
</dbReference>
<dbReference type="PDB" id="4U51">
    <property type="method" value="X-ray"/>
    <property type="resolution" value="3.20 A"/>
    <property type="chains" value="C0/c0=1-105"/>
</dbReference>
<dbReference type="PDB" id="4U52">
    <property type="method" value="X-ray"/>
    <property type="resolution" value="3.00 A"/>
    <property type="chains" value="C0/c0=1-105"/>
</dbReference>
<dbReference type="PDB" id="4U53">
    <property type="method" value="X-ray"/>
    <property type="resolution" value="3.30 A"/>
    <property type="chains" value="C0/c0=1-105"/>
</dbReference>
<dbReference type="PDB" id="4U55">
    <property type="method" value="X-ray"/>
    <property type="resolution" value="3.20 A"/>
    <property type="chains" value="C0/c0=1-105"/>
</dbReference>
<dbReference type="PDB" id="4U56">
    <property type="method" value="X-ray"/>
    <property type="resolution" value="3.45 A"/>
    <property type="chains" value="C0/c0=1-105"/>
</dbReference>
<dbReference type="PDB" id="4U6F">
    <property type="method" value="X-ray"/>
    <property type="resolution" value="3.10 A"/>
    <property type="chains" value="C0/c0=1-105"/>
</dbReference>
<dbReference type="PDB" id="4V88">
    <property type="method" value="X-ray"/>
    <property type="resolution" value="3.00 A"/>
    <property type="chains" value="AK/CK=1-105"/>
</dbReference>
<dbReference type="PDB" id="4V8Y">
    <property type="method" value="EM"/>
    <property type="resolution" value="4.30 A"/>
    <property type="chains" value="AK=1-105"/>
</dbReference>
<dbReference type="PDB" id="4V8Z">
    <property type="method" value="EM"/>
    <property type="resolution" value="6.60 A"/>
    <property type="chains" value="AK=1-105"/>
</dbReference>
<dbReference type="PDB" id="4V92">
    <property type="method" value="EM"/>
    <property type="resolution" value="3.70 A"/>
    <property type="chains" value="K=1-93"/>
</dbReference>
<dbReference type="PDB" id="5DAT">
    <property type="method" value="X-ray"/>
    <property type="resolution" value="3.15 A"/>
    <property type="chains" value="C0/c0=1-105"/>
</dbReference>
<dbReference type="PDB" id="5DC3">
    <property type="method" value="X-ray"/>
    <property type="resolution" value="3.25 A"/>
    <property type="chains" value="C0=1-105, c0=1-103"/>
</dbReference>
<dbReference type="PDB" id="5DGE">
    <property type="method" value="X-ray"/>
    <property type="resolution" value="3.45 A"/>
    <property type="chains" value="C0/c0=1-105"/>
</dbReference>
<dbReference type="PDB" id="5DGF">
    <property type="method" value="X-ray"/>
    <property type="resolution" value="3.30 A"/>
    <property type="chains" value="C0/c0=1-105"/>
</dbReference>
<dbReference type="PDB" id="5DGV">
    <property type="method" value="X-ray"/>
    <property type="resolution" value="3.10 A"/>
    <property type="chains" value="C0/c0=1-105"/>
</dbReference>
<dbReference type="PDB" id="5FCI">
    <property type="method" value="X-ray"/>
    <property type="resolution" value="3.40 A"/>
    <property type="chains" value="C0=1-105, c0=1-84"/>
</dbReference>
<dbReference type="PDB" id="5FCJ">
    <property type="method" value="X-ray"/>
    <property type="resolution" value="3.10 A"/>
    <property type="chains" value="C0/c0=1-84"/>
</dbReference>
<dbReference type="PDB" id="5I4L">
    <property type="method" value="X-ray"/>
    <property type="resolution" value="3.10 A"/>
    <property type="chains" value="C0/c0=1-98"/>
</dbReference>
<dbReference type="PDB" id="5JUO">
    <property type="method" value="EM"/>
    <property type="resolution" value="4.00 A"/>
    <property type="chains" value="HB=1-105"/>
</dbReference>
<dbReference type="PDB" id="5JUP">
    <property type="method" value="EM"/>
    <property type="resolution" value="3.50 A"/>
    <property type="chains" value="HB=1-105"/>
</dbReference>
<dbReference type="PDB" id="5JUS">
    <property type="method" value="EM"/>
    <property type="resolution" value="4.20 A"/>
    <property type="chains" value="HB=1-105"/>
</dbReference>
<dbReference type="PDB" id="5JUT">
    <property type="method" value="EM"/>
    <property type="resolution" value="4.00 A"/>
    <property type="chains" value="HB=1-105"/>
</dbReference>
<dbReference type="PDB" id="5JUU">
    <property type="method" value="EM"/>
    <property type="resolution" value="4.00 A"/>
    <property type="chains" value="HB=1-105"/>
</dbReference>
<dbReference type="PDB" id="5LYB">
    <property type="method" value="X-ray"/>
    <property type="resolution" value="3.25 A"/>
    <property type="chains" value="C0=1-83, c0=1-79"/>
</dbReference>
<dbReference type="PDB" id="5M1J">
    <property type="method" value="EM"/>
    <property type="resolution" value="3.30 A"/>
    <property type="chains" value="K2=1-96"/>
</dbReference>
<dbReference type="PDB" id="5MC6">
    <property type="method" value="EM"/>
    <property type="resolution" value="3.80 A"/>
    <property type="chains" value="C=1-105"/>
</dbReference>
<dbReference type="PDB" id="5MEI">
    <property type="method" value="X-ray"/>
    <property type="resolution" value="3.50 A"/>
    <property type="chains" value="L/c0=1-105"/>
</dbReference>
<dbReference type="PDB" id="5NDG">
    <property type="method" value="X-ray"/>
    <property type="resolution" value="3.70 A"/>
    <property type="chains" value="C0/c0=1-105"/>
</dbReference>
<dbReference type="PDB" id="5NDV">
    <property type="method" value="X-ray"/>
    <property type="resolution" value="3.30 A"/>
    <property type="chains" value="C0/c0=1-105"/>
</dbReference>
<dbReference type="PDB" id="5NDW">
    <property type="method" value="X-ray"/>
    <property type="resolution" value="3.70 A"/>
    <property type="chains" value="C0/c0=1-105"/>
</dbReference>
<dbReference type="PDB" id="5OBM">
    <property type="method" value="X-ray"/>
    <property type="resolution" value="3.40 A"/>
    <property type="chains" value="C0/c0=1-105"/>
</dbReference>
<dbReference type="PDB" id="5ON6">
    <property type="method" value="X-ray"/>
    <property type="resolution" value="3.10 A"/>
    <property type="chains" value="L/c0=1-105"/>
</dbReference>
<dbReference type="PDB" id="5TBW">
    <property type="method" value="X-ray"/>
    <property type="resolution" value="3.00 A"/>
    <property type="chains" value="L/c0=1-105"/>
</dbReference>
<dbReference type="PDB" id="5TGA">
    <property type="method" value="X-ray"/>
    <property type="resolution" value="3.30 A"/>
    <property type="chains" value="C0=1-96, c0=1-84"/>
</dbReference>
<dbReference type="PDB" id="5TGM">
    <property type="method" value="X-ray"/>
    <property type="resolution" value="3.50 A"/>
    <property type="chains" value="C0=1-83, c0=1-79"/>
</dbReference>
<dbReference type="PDB" id="6GQ1">
    <property type="method" value="EM"/>
    <property type="resolution" value="4.40 A"/>
    <property type="chains" value="AA=1-105"/>
</dbReference>
<dbReference type="PDB" id="6GQB">
    <property type="method" value="EM"/>
    <property type="resolution" value="3.90 A"/>
    <property type="chains" value="AA=1-105"/>
</dbReference>
<dbReference type="PDB" id="6GQV">
    <property type="method" value="EM"/>
    <property type="resolution" value="4.00 A"/>
    <property type="chains" value="AA=1-105"/>
</dbReference>
<dbReference type="PDB" id="6HHQ">
    <property type="method" value="X-ray"/>
    <property type="resolution" value="3.10 A"/>
    <property type="chains" value="L/c0=1-105"/>
</dbReference>
<dbReference type="PDB" id="6I7O">
    <property type="method" value="EM"/>
    <property type="resolution" value="5.30 A"/>
    <property type="chains" value="C/Cb=1-92"/>
</dbReference>
<dbReference type="PDB" id="6Q8Y">
    <property type="method" value="EM"/>
    <property type="resolution" value="3.10 A"/>
    <property type="chains" value="C=1-96"/>
</dbReference>
<dbReference type="PDB" id="6RBE">
    <property type="method" value="EM"/>
    <property type="resolution" value="3.80 A"/>
    <property type="chains" value="K=1-105"/>
</dbReference>
<dbReference type="PDB" id="6S47">
    <property type="method" value="EM"/>
    <property type="resolution" value="3.28 A"/>
    <property type="chains" value="BL=1-105"/>
</dbReference>
<dbReference type="PDB" id="6SNT">
    <property type="method" value="EM"/>
    <property type="resolution" value="2.80 A"/>
    <property type="chains" value="K=1-105"/>
</dbReference>
<dbReference type="PDB" id="6SV4">
    <property type="method" value="EM"/>
    <property type="resolution" value="3.30 A"/>
    <property type="chains" value="C/Cb/Cc=1-92"/>
</dbReference>
<dbReference type="PDB" id="6T4Q">
    <property type="method" value="EM"/>
    <property type="resolution" value="2.60 A"/>
    <property type="chains" value="SK=1-92"/>
</dbReference>
<dbReference type="PDB" id="6T7I">
    <property type="method" value="EM"/>
    <property type="resolution" value="3.20 A"/>
    <property type="chains" value="SK=1-105"/>
</dbReference>
<dbReference type="PDB" id="6T7T">
    <property type="method" value="EM"/>
    <property type="resolution" value="3.10 A"/>
    <property type="chains" value="SK=1-105"/>
</dbReference>
<dbReference type="PDB" id="6T83">
    <property type="method" value="EM"/>
    <property type="resolution" value="4.00 A"/>
    <property type="chains" value="Kb/l=1-105"/>
</dbReference>
<dbReference type="PDB" id="6TB3">
    <property type="method" value="EM"/>
    <property type="resolution" value="2.80 A"/>
    <property type="chains" value="C=1-92"/>
</dbReference>
<dbReference type="PDB" id="6TNU">
    <property type="method" value="EM"/>
    <property type="resolution" value="3.10 A"/>
    <property type="chains" value="C=1-92"/>
</dbReference>
<dbReference type="PDB" id="6WDR">
    <property type="method" value="EM"/>
    <property type="resolution" value="3.70 A"/>
    <property type="chains" value="K=1-96"/>
</dbReference>
<dbReference type="PDB" id="6WOO">
    <property type="method" value="EM"/>
    <property type="resolution" value="2.90 A"/>
    <property type="chains" value="KK=1-96"/>
</dbReference>
<dbReference type="PDB" id="6XIQ">
    <property type="method" value="EM"/>
    <property type="resolution" value="4.20 A"/>
    <property type="chains" value="AA=1-105"/>
</dbReference>
<dbReference type="PDB" id="6XIR">
    <property type="method" value="EM"/>
    <property type="resolution" value="3.20 A"/>
    <property type="chains" value="AA=1-105"/>
</dbReference>
<dbReference type="PDB" id="6Z6J">
    <property type="method" value="EM"/>
    <property type="resolution" value="3.40 A"/>
    <property type="chains" value="SK=1-105"/>
</dbReference>
<dbReference type="PDB" id="6Z6K">
    <property type="method" value="EM"/>
    <property type="resolution" value="3.40 A"/>
    <property type="chains" value="SK=1-105"/>
</dbReference>
<dbReference type="PDB" id="6ZCE">
    <property type="method" value="EM"/>
    <property type="resolution" value="5.30 A"/>
    <property type="chains" value="L=1-105"/>
</dbReference>
<dbReference type="PDB" id="6ZU9">
    <property type="method" value="EM"/>
    <property type="resolution" value="6.20 A"/>
    <property type="chains" value="D=1-105"/>
</dbReference>
<dbReference type="PDB" id="6ZVI">
    <property type="method" value="EM"/>
    <property type="resolution" value="3.00 A"/>
    <property type="chains" value="s=1-92"/>
</dbReference>
<dbReference type="PDB" id="7A1G">
    <property type="method" value="EM"/>
    <property type="resolution" value="3.00 A"/>
    <property type="chains" value="C=1-92"/>
</dbReference>
<dbReference type="PDB" id="7B7D">
    <property type="method" value="EM"/>
    <property type="resolution" value="3.30 A"/>
    <property type="chains" value="C=1-92"/>
</dbReference>
<dbReference type="PDB" id="7MPI">
    <property type="method" value="EM"/>
    <property type="resolution" value="3.05 A"/>
    <property type="chains" value="BK=1-96"/>
</dbReference>
<dbReference type="PDB" id="7MPJ">
    <property type="method" value="EM"/>
    <property type="resolution" value="2.70 A"/>
    <property type="chains" value="BK=1-96"/>
</dbReference>
<dbReference type="PDB" id="7N8B">
    <property type="method" value="EM"/>
    <property type="resolution" value="3.05 A"/>
    <property type="chains" value="BK=1-96"/>
</dbReference>
<dbReference type="PDB" id="7NRC">
    <property type="method" value="EM"/>
    <property type="resolution" value="3.90 A"/>
    <property type="chains" value="SC=1-92"/>
</dbReference>
<dbReference type="PDB" id="7NRD">
    <property type="method" value="EM"/>
    <property type="resolution" value="4.36 A"/>
    <property type="chains" value="SC=1-92"/>
</dbReference>
<dbReference type="PDB" id="7ZPQ">
    <property type="method" value="EM"/>
    <property type="resolution" value="3.47 A"/>
    <property type="chains" value="AK=1-92"/>
</dbReference>
<dbReference type="PDB" id="7ZRS">
    <property type="method" value="EM"/>
    <property type="resolution" value="4.80 A"/>
    <property type="chains" value="AK=1-92"/>
</dbReference>
<dbReference type="PDB" id="7ZUW">
    <property type="method" value="EM"/>
    <property type="resolution" value="4.30 A"/>
    <property type="chains" value="AK=1-92"/>
</dbReference>
<dbReference type="PDB" id="7ZUX">
    <property type="method" value="EM"/>
    <property type="resolution" value="2.50 A"/>
    <property type="chains" value="DK=1-92"/>
</dbReference>
<dbReference type="PDB" id="7ZW0">
    <property type="method" value="EM"/>
    <property type="resolution" value="2.40 A"/>
    <property type="chains" value="sC=1-105"/>
</dbReference>
<dbReference type="PDB" id="8BN3">
    <property type="method" value="EM"/>
    <property type="resolution" value="2.40 A"/>
    <property type="chains" value="C0=1-96"/>
</dbReference>
<dbReference type="PDB" id="8BQD">
    <property type="method" value="EM"/>
    <property type="resolution" value="3.90 A"/>
    <property type="chains" value="C=1-92"/>
</dbReference>
<dbReference type="PDB" id="8BQX">
    <property type="method" value="EM"/>
    <property type="resolution" value="3.80 A"/>
    <property type="chains" value="C=1-92"/>
</dbReference>
<dbReference type="PDB" id="8CAH">
    <property type="method" value="EM"/>
    <property type="resolution" value="3.00 A"/>
    <property type="chains" value="C=1-105"/>
</dbReference>
<dbReference type="PDB" id="8CAS">
    <property type="method" value="EM"/>
    <property type="resolution" value="3.30 A"/>
    <property type="chains" value="D=1-105"/>
</dbReference>
<dbReference type="PDB" id="8CCS">
    <property type="method" value="EM"/>
    <property type="resolution" value="1.97 A"/>
    <property type="chains" value="n=1-105"/>
</dbReference>
<dbReference type="PDB" id="8CDL">
    <property type="method" value="EM"/>
    <property type="resolution" value="2.72 A"/>
    <property type="chains" value="n=1-105"/>
</dbReference>
<dbReference type="PDB" id="8CDR">
    <property type="method" value="EM"/>
    <property type="resolution" value="2.04 A"/>
    <property type="chains" value="n=1-105"/>
</dbReference>
<dbReference type="PDB" id="8CEH">
    <property type="method" value="EM"/>
    <property type="resolution" value="2.05 A"/>
    <property type="chains" value="n=1-105"/>
</dbReference>
<dbReference type="PDB" id="8CF5">
    <property type="method" value="EM"/>
    <property type="resolution" value="2.71 A"/>
    <property type="chains" value="n=1-105"/>
</dbReference>
<dbReference type="PDB" id="8CG8">
    <property type="method" value="EM"/>
    <property type="resolution" value="2.57 A"/>
    <property type="chains" value="n=1-105"/>
</dbReference>
<dbReference type="PDB" id="8CGN">
    <property type="method" value="EM"/>
    <property type="resolution" value="2.28 A"/>
    <property type="chains" value="n=1-105"/>
</dbReference>
<dbReference type="PDB" id="8CIV">
    <property type="method" value="EM"/>
    <property type="resolution" value="2.47 A"/>
    <property type="chains" value="n=1-105"/>
</dbReference>
<dbReference type="PDB" id="8CKU">
    <property type="method" value="EM"/>
    <property type="resolution" value="3.11 A"/>
    <property type="chains" value="n=1-105"/>
</dbReference>
<dbReference type="PDB" id="8CMJ">
    <property type="method" value="EM"/>
    <property type="resolution" value="3.79 A"/>
    <property type="chains" value="n=1-105"/>
</dbReference>
<dbReference type="PDB" id="8EUB">
    <property type="method" value="EM"/>
    <property type="resolution" value="2.52 A"/>
    <property type="chains" value="BK=1-105"/>
</dbReference>
<dbReference type="PDB" id="8EVP">
    <property type="method" value="EM"/>
    <property type="resolution" value="2.38 A"/>
    <property type="chains" value="BK=1-105"/>
</dbReference>
<dbReference type="PDB" id="8EVQ">
    <property type="method" value="EM"/>
    <property type="resolution" value="2.72 A"/>
    <property type="chains" value="BK=1-105"/>
</dbReference>
<dbReference type="PDB" id="8EVR">
    <property type="method" value="EM"/>
    <property type="resolution" value="2.87 A"/>
    <property type="chains" value="BK=1-105"/>
</dbReference>
<dbReference type="PDB" id="8EVS">
    <property type="method" value="EM"/>
    <property type="resolution" value="2.62 A"/>
    <property type="chains" value="BK=1-105"/>
</dbReference>
<dbReference type="PDB" id="8EVT">
    <property type="method" value="EM"/>
    <property type="resolution" value="2.20 A"/>
    <property type="chains" value="BK=1-105"/>
</dbReference>
<dbReference type="PDB" id="8EWB">
    <property type="method" value="EM"/>
    <property type="resolution" value="2.87 A"/>
    <property type="chains" value="BK=1-105"/>
</dbReference>
<dbReference type="PDB" id="8EWC">
    <property type="method" value="EM"/>
    <property type="resolution" value="2.45 A"/>
    <property type="chains" value="BK=1-105"/>
</dbReference>
<dbReference type="PDB" id="8K2D">
    <property type="method" value="EM"/>
    <property type="resolution" value="3.20 A"/>
    <property type="chains" value="SK=1-105"/>
</dbReference>
<dbReference type="PDB" id="8K82">
    <property type="method" value="EM"/>
    <property type="resolution" value="3.00 A"/>
    <property type="chains" value="SK=1-105"/>
</dbReference>
<dbReference type="PDB" id="8P4V">
    <property type="method" value="X-ray"/>
    <property type="resolution" value="3.16 A"/>
    <property type="chains" value="L/c0=1-105"/>
</dbReference>
<dbReference type="PDB" id="8P9A">
    <property type="method" value="X-ray"/>
    <property type="resolution" value="2.90 A"/>
    <property type="chains" value="L/c0=1-105"/>
</dbReference>
<dbReference type="PDB" id="8T2X">
    <property type="method" value="EM"/>
    <property type="resolution" value="2.46 A"/>
    <property type="chains" value="BK=1-105"/>
</dbReference>
<dbReference type="PDB" id="8T2Y">
    <property type="method" value="EM"/>
    <property type="resolution" value="2.20 A"/>
    <property type="chains" value="BK=1-105"/>
</dbReference>
<dbReference type="PDB" id="8T2Z">
    <property type="method" value="EM"/>
    <property type="resolution" value="2.40 A"/>
    <property type="chains" value="BK=1-105"/>
</dbReference>
<dbReference type="PDB" id="8T30">
    <property type="method" value="EM"/>
    <property type="resolution" value="2.88 A"/>
    <property type="chains" value="BK=1-105"/>
</dbReference>
<dbReference type="PDB" id="8T3A">
    <property type="method" value="EM"/>
    <property type="resolution" value="2.86 A"/>
    <property type="chains" value="BK=1-105"/>
</dbReference>
<dbReference type="PDB" id="8T3B">
    <property type="method" value="EM"/>
    <property type="resolution" value="3.08 A"/>
    <property type="chains" value="BK=1-105"/>
</dbReference>
<dbReference type="PDB" id="8T3C">
    <property type="method" value="EM"/>
    <property type="resolution" value="3.86 A"/>
    <property type="chains" value="BK=1-105"/>
</dbReference>
<dbReference type="PDB" id="8T3D">
    <property type="method" value="EM"/>
    <property type="resolution" value="2.95 A"/>
    <property type="chains" value="BK=1-105"/>
</dbReference>
<dbReference type="PDB" id="8T3E">
    <property type="method" value="EM"/>
    <property type="resolution" value="3.04 A"/>
    <property type="chains" value="BK=1-105"/>
</dbReference>
<dbReference type="PDB" id="8T3F">
    <property type="method" value="EM"/>
    <property type="resolution" value="3.09 A"/>
    <property type="chains" value="BK=1-105"/>
</dbReference>
<dbReference type="PDB" id="8UT0">
    <property type="method" value="EM"/>
    <property type="resolution" value="3.22 A"/>
    <property type="chains" value="SC=1-92"/>
</dbReference>
<dbReference type="PDB" id="8UTI">
    <property type="method" value="EM"/>
    <property type="resolution" value="3.13 A"/>
    <property type="chains" value="SC=1-92"/>
</dbReference>
<dbReference type="PDB" id="8XU8">
    <property type="method" value="EM"/>
    <property type="resolution" value="3.40 A"/>
    <property type="chains" value="SC=1-92"/>
</dbReference>
<dbReference type="PDB" id="8Y0U">
    <property type="method" value="EM"/>
    <property type="resolution" value="3.59 A"/>
    <property type="chains" value="SK=1-105"/>
</dbReference>
<dbReference type="PDB" id="8YLD">
    <property type="method" value="EM"/>
    <property type="resolution" value="3.90 A"/>
    <property type="chains" value="SC=1-92"/>
</dbReference>
<dbReference type="PDB" id="8YLR">
    <property type="method" value="EM"/>
    <property type="resolution" value="3.90 A"/>
    <property type="chains" value="SC=1-92"/>
</dbReference>
<dbReference type="PDB" id="8Z70">
    <property type="method" value="EM"/>
    <property type="resolution" value="3.20 A"/>
    <property type="chains" value="SC=1-92"/>
</dbReference>
<dbReference type="PDB" id="8Z71">
    <property type="method" value="EM"/>
    <property type="resolution" value="3.60 A"/>
    <property type="chains" value="SC=1-92"/>
</dbReference>
<dbReference type="PDB" id="9F9S">
    <property type="method" value="EM"/>
    <property type="resolution" value="2.90 A"/>
    <property type="chains" value="Rk/Sk=1-105"/>
</dbReference>
<dbReference type="PDBsum" id="3J6X"/>
<dbReference type="PDBsum" id="3J6Y"/>
<dbReference type="PDBsum" id="3J77"/>
<dbReference type="PDBsum" id="3J78"/>
<dbReference type="PDBsum" id="4U3N"/>
<dbReference type="PDBsum" id="4U3U"/>
<dbReference type="PDBsum" id="4U4N"/>
<dbReference type="PDBsum" id="4U4O"/>
<dbReference type="PDBsum" id="4U4Q"/>
<dbReference type="PDBsum" id="4U4R"/>
<dbReference type="PDBsum" id="4U4U"/>
<dbReference type="PDBsum" id="4U4Y"/>
<dbReference type="PDBsum" id="4U4Z"/>
<dbReference type="PDBsum" id="4U50"/>
<dbReference type="PDBsum" id="4U51"/>
<dbReference type="PDBsum" id="4U52"/>
<dbReference type="PDBsum" id="4U53"/>
<dbReference type="PDBsum" id="4U55"/>
<dbReference type="PDBsum" id="4U56"/>
<dbReference type="PDBsum" id="4U6F"/>
<dbReference type="PDBsum" id="4V88"/>
<dbReference type="PDBsum" id="4V8Y"/>
<dbReference type="PDBsum" id="4V8Z"/>
<dbReference type="PDBsum" id="4V92"/>
<dbReference type="PDBsum" id="5DAT"/>
<dbReference type="PDBsum" id="5DC3"/>
<dbReference type="PDBsum" id="5DGE"/>
<dbReference type="PDBsum" id="5DGF"/>
<dbReference type="PDBsum" id="5DGV"/>
<dbReference type="PDBsum" id="5FCI"/>
<dbReference type="PDBsum" id="5FCJ"/>
<dbReference type="PDBsum" id="5I4L"/>
<dbReference type="PDBsum" id="5JUO"/>
<dbReference type="PDBsum" id="5JUP"/>
<dbReference type="PDBsum" id="5JUS"/>
<dbReference type="PDBsum" id="5JUT"/>
<dbReference type="PDBsum" id="5JUU"/>
<dbReference type="PDBsum" id="5LYB"/>
<dbReference type="PDBsum" id="5M1J"/>
<dbReference type="PDBsum" id="5MC6"/>
<dbReference type="PDBsum" id="5MEI"/>
<dbReference type="PDBsum" id="5NDG"/>
<dbReference type="PDBsum" id="5NDV"/>
<dbReference type="PDBsum" id="5NDW"/>
<dbReference type="PDBsum" id="5OBM"/>
<dbReference type="PDBsum" id="5ON6"/>
<dbReference type="PDBsum" id="5TBW"/>
<dbReference type="PDBsum" id="5TGA"/>
<dbReference type="PDBsum" id="5TGM"/>
<dbReference type="PDBsum" id="6GQ1"/>
<dbReference type="PDBsum" id="6GQB"/>
<dbReference type="PDBsum" id="6GQV"/>
<dbReference type="PDBsum" id="6HHQ"/>
<dbReference type="PDBsum" id="6I7O"/>
<dbReference type="PDBsum" id="6Q8Y"/>
<dbReference type="PDBsum" id="6RBE"/>
<dbReference type="PDBsum" id="6S47"/>
<dbReference type="PDBsum" id="6SNT"/>
<dbReference type="PDBsum" id="6SV4"/>
<dbReference type="PDBsum" id="6T4Q"/>
<dbReference type="PDBsum" id="6T7I"/>
<dbReference type="PDBsum" id="6T7T"/>
<dbReference type="PDBsum" id="6T83"/>
<dbReference type="PDBsum" id="6TB3"/>
<dbReference type="PDBsum" id="6TNU"/>
<dbReference type="PDBsum" id="6WDR"/>
<dbReference type="PDBsum" id="6WOO"/>
<dbReference type="PDBsum" id="6XIQ"/>
<dbReference type="PDBsum" id="6XIR"/>
<dbReference type="PDBsum" id="6Z6J"/>
<dbReference type="PDBsum" id="6Z6K"/>
<dbReference type="PDBsum" id="6ZCE"/>
<dbReference type="PDBsum" id="6ZU9"/>
<dbReference type="PDBsum" id="6ZVI"/>
<dbReference type="PDBsum" id="7A1G"/>
<dbReference type="PDBsum" id="7B7D"/>
<dbReference type="PDBsum" id="7MPI"/>
<dbReference type="PDBsum" id="7MPJ"/>
<dbReference type="PDBsum" id="7N8B"/>
<dbReference type="PDBsum" id="7NRC"/>
<dbReference type="PDBsum" id="7NRD"/>
<dbReference type="PDBsum" id="7ZPQ"/>
<dbReference type="PDBsum" id="7ZRS"/>
<dbReference type="PDBsum" id="7ZUW"/>
<dbReference type="PDBsum" id="7ZUX"/>
<dbReference type="PDBsum" id="7ZW0"/>
<dbReference type="PDBsum" id="8BN3"/>
<dbReference type="PDBsum" id="8BQD"/>
<dbReference type="PDBsum" id="8BQX"/>
<dbReference type="PDBsum" id="8CAH"/>
<dbReference type="PDBsum" id="8CAS"/>
<dbReference type="PDBsum" id="8CCS"/>
<dbReference type="PDBsum" id="8CDL"/>
<dbReference type="PDBsum" id="8CDR"/>
<dbReference type="PDBsum" id="8CEH"/>
<dbReference type="PDBsum" id="8CF5"/>
<dbReference type="PDBsum" id="8CG8"/>
<dbReference type="PDBsum" id="8CGN"/>
<dbReference type="PDBsum" id="8CIV"/>
<dbReference type="PDBsum" id="8CKU"/>
<dbReference type="PDBsum" id="8CMJ"/>
<dbReference type="PDBsum" id="8EUB"/>
<dbReference type="PDBsum" id="8EVP"/>
<dbReference type="PDBsum" id="8EVQ"/>
<dbReference type="PDBsum" id="8EVR"/>
<dbReference type="PDBsum" id="8EVS"/>
<dbReference type="PDBsum" id="8EVT"/>
<dbReference type="PDBsum" id="8EWB"/>
<dbReference type="PDBsum" id="8EWC"/>
<dbReference type="PDBsum" id="8K2D"/>
<dbReference type="PDBsum" id="8K82"/>
<dbReference type="PDBsum" id="8P4V"/>
<dbReference type="PDBsum" id="8P9A"/>
<dbReference type="PDBsum" id="8T2X"/>
<dbReference type="PDBsum" id="8T2Y"/>
<dbReference type="PDBsum" id="8T2Z"/>
<dbReference type="PDBsum" id="8T30"/>
<dbReference type="PDBsum" id="8T3A"/>
<dbReference type="PDBsum" id="8T3B"/>
<dbReference type="PDBsum" id="8T3C"/>
<dbReference type="PDBsum" id="8T3D"/>
<dbReference type="PDBsum" id="8T3E"/>
<dbReference type="PDBsum" id="8T3F"/>
<dbReference type="PDBsum" id="8UT0"/>
<dbReference type="PDBsum" id="8UTI"/>
<dbReference type="PDBsum" id="8XU8"/>
<dbReference type="PDBsum" id="8Y0U"/>
<dbReference type="PDBsum" id="8YLD"/>
<dbReference type="PDBsum" id="8YLR"/>
<dbReference type="PDBsum" id="8Z70"/>
<dbReference type="PDBsum" id="8Z71"/>
<dbReference type="PDBsum" id="9F9S"/>
<dbReference type="EMDB" id="EMD-10315"/>
<dbReference type="EMDB" id="EMD-10377"/>
<dbReference type="EMDB" id="EMD-10396"/>
<dbReference type="EMDB" id="EMD-10397"/>
<dbReference type="EMDB" id="EMD-10398"/>
<dbReference type="EMDB" id="EMD-10431"/>
<dbReference type="EMDB" id="EMD-10537"/>
<dbReference type="EMDB" id="EMD-11096"/>
<dbReference type="EMDB" id="EMD-11097"/>
<dbReference type="EMDB" id="EMD-11439"/>
<dbReference type="EMDB" id="EMD-11457"/>
<dbReference type="EMDB" id="EMD-11608"/>
<dbReference type="EMDB" id="EMD-14861"/>
<dbReference type="EMDB" id="EMD-14921"/>
<dbReference type="EMDB" id="EMD-14978"/>
<dbReference type="EMDB" id="EMD-14979"/>
<dbReference type="EMDB" id="EMD-14990"/>
<dbReference type="EMDB" id="EMD-16127"/>
<dbReference type="EMDB" id="EMD-16182"/>
<dbReference type="EMDB" id="EMD-16525"/>
<dbReference type="EMDB" id="EMD-16533"/>
<dbReference type="EMDB" id="EMD-16563"/>
<dbReference type="EMDB" id="EMD-16591"/>
<dbReference type="EMDB" id="EMD-16594"/>
<dbReference type="EMDB" id="EMD-16609"/>
<dbReference type="EMDB" id="EMD-16616"/>
<dbReference type="EMDB" id="EMD-16634"/>
<dbReference type="EMDB" id="EMD-16648"/>
<dbReference type="EMDB" id="EMD-16684"/>
<dbReference type="EMDB" id="EMD-16702"/>
<dbReference type="EMDB" id="EMD-16729"/>
<dbReference type="EMDB" id="EMD-21644"/>
<dbReference type="EMDB" id="EMD-21859"/>
<dbReference type="EMDB" id="EMD-22196"/>
<dbReference type="EMDB" id="EMD-22198"/>
<dbReference type="EMDB" id="EMD-23934"/>
<dbReference type="EMDB" id="EMD-23935"/>
<dbReference type="EMDB" id="EMD-24235"/>
<dbReference type="EMDB" id="EMD-28610"/>
<dbReference type="EMDB" id="EMD-28632"/>
<dbReference type="EMDB" id="EMD-28633"/>
<dbReference type="EMDB" id="EMD-28634"/>
<dbReference type="EMDB" id="EMD-28635"/>
<dbReference type="EMDB" id="EMD-28636"/>
<dbReference type="EMDB" id="EMD-28642"/>
<dbReference type="EMDB" id="EMD-28643"/>
<dbReference type="EMDB" id="EMD-36839"/>
<dbReference type="EMDB" id="EMD-36945"/>
<dbReference type="EMDB" id="EMD-38660"/>
<dbReference type="EMDB" id="EMD-40990"/>
<dbReference type="EMDB" id="EMD-40991"/>
<dbReference type="EMDB" id="EMD-40992"/>
<dbReference type="EMDB" id="EMD-40993"/>
<dbReference type="EMDB" id="EMD-40997"/>
<dbReference type="EMDB" id="EMD-40998"/>
<dbReference type="EMDB" id="EMD-40999"/>
<dbReference type="EMDB" id="EMD-41000"/>
<dbReference type="EMDB" id="EMD-41001"/>
<dbReference type="EMDB" id="EMD-41002"/>
<dbReference type="EMDB" id="EMD-4140"/>
<dbReference type="EMDB" id="EMD-42525"/>
<dbReference type="EMDB" id="EMD-42540"/>
<dbReference type="EMDB" id="EMD-4427"/>
<dbReference type="EMDB" id="EMD-4474"/>
<dbReference type="EMDB" id="EMD-4793"/>
<dbReference type="EMDB" id="EMD-50259"/>
<dbReference type="SMR" id="Q08745"/>
<dbReference type="BioGRID" id="34681">
    <property type="interactions" value="911"/>
</dbReference>
<dbReference type="ComplexPortal" id="CPX-1599">
    <property type="entry name" value="40S cytosolic small ribosomal subunit"/>
</dbReference>
<dbReference type="FunCoup" id="Q08745">
    <property type="interactions" value="1082"/>
</dbReference>
<dbReference type="IntAct" id="Q08745">
    <property type="interactions" value="27"/>
</dbReference>
<dbReference type="MINT" id="Q08745"/>
<dbReference type="STRING" id="4932.YOR293W"/>
<dbReference type="iPTMnet" id="Q08745"/>
<dbReference type="PaxDb" id="4932-YOR293W"/>
<dbReference type="PeptideAtlas" id="Q08745"/>
<dbReference type="TopDownProteomics" id="Q08745"/>
<dbReference type="EnsemblFungi" id="YOR293W_mRNA">
    <property type="protein sequence ID" value="YOR293W"/>
    <property type="gene ID" value="YOR293W"/>
</dbReference>
<dbReference type="GeneID" id="854468"/>
<dbReference type="KEGG" id="sce:YOR293W"/>
<dbReference type="AGR" id="SGD:S000005819"/>
<dbReference type="SGD" id="S000005819">
    <property type="gene designation" value="RPS10A"/>
</dbReference>
<dbReference type="VEuPathDB" id="FungiDB:YOR293W"/>
<dbReference type="eggNOG" id="KOG3344">
    <property type="taxonomic scope" value="Eukaryota"/>
</dbReference>
<dbReference type="GeneTree" id="ENSGT00940000166022"/>
<dbReference type="HOGENOM" id="CLU_089349_4_1_1"/>
<dbReference type="InParanoid" id="Q08745"/>
<dbReference type="OMA" id="ERTKIHR"/>
<dbReference type="OrthoDB" id="5211809at2759"/>
<dbReference type="BioCyc" id="YEAST:G3O-33778-MONOMER"/>
<dbReference type="Reactome" id="R-SCE-156827">
    <property type="pathway name" value="L13a-mediated translational silencing of Ceruloplasmin expression"/>
</dbReference>
<dbReference type="Reactome" id="R-SCE-1799339">
    <property type="pathway name" value="SRP-dependent cotranslational protein targeting to membrane"/>
</dbReference>
<dbReference type="Reactome" id="R-SCE-72649">
    <property type="pathway name" value="Translation initiation complex formation"/>
</dbReference>
<dbReference type="Reactome" id="R-SCE-72689">
    <property type="pathway name" value="Formation of a pool of free 40S subunits"/>
</dbReference>
<dbReference type="Reactome" id="R-SCE-72695">
    <property type="pathway name" value="Formation of the ternary complex, and subsequently, the 43S complex"/>
</dbReference>
<dbReference type="Reactome" id="R-SCE-72702">
    <property type="pathway name" value="Ribosomal scanning and start codon recognition"/>
</dbReference>
<dbReference type="Reactome" id="R-SCE-72706">
    <property type="pathway name" value="GTP hydrolysis and joining of the 60S ribosomal subunit"/>
</dbReference>
<dbReference type="Reactome" id="R-SCE-975956">
    <property type="pathway name" value="Nonsense Mediated Decay (NMD) independent of the Exon Junction Complex (EJC)"/>
</dbReference>
<dbReference type="Reactome" id="R-SCE-975957">
    <property type="pathway name" value="Nonsense Mediated Decay (NMD) enhanced by the Exon Junction Complex (EJC)"/>
</dbReference>
<dbReference type="BioGRID-ORCS" id="854468">
    <property type="hits" value="1 hit in 10 CRISPR screens"/>
</dbReference>
<dbReference type="CD-CODE" id="BDAE0F88">
    <property type="entry name" value="Nucleolus"/>
</dbReference>
<dbReference type="PRO" id="PR:Q08745"/>
<dbReference type="Proteomes" id="UP000002311">
    <property type="component" value="Chromosome XV"/>
</dbReference>
<dbReference type="RNAct" id="Q08745">
    <property type="molecule type" value="protein"/>
</dbReference>
<dbReference type="GO" id="GO:0005829">
    <property type="term" value="C:cytosol"/>
    <property type="evidence" value="ECO:0000304"/>
    <property type="project" value="Reactome"/>
</dbReference>
<dbReference type="GO" id="GO:0022627">
    <property type="term" value="C:cytosolic small ribosomal subunit"/>
    <property type="evidence" value="ECO:0000318"/>
    <property type="project" value="GO_Central"/>
</dbReference>
<dbReference type="GO" id="GO:0003723">
    <property type="term" value="F:RNA binding"/>
    <property type="evidence" value="ECO:0000318"/>
    <property type="project" value="GO_Central"/>
</dbReference>
<dbReference type="GO" id="GO:0003735">
    <property type="term" value="F:structural constituent of ribosome"/>
    <property type="evidence" value="ECO:0000318"/>
    <property type="project" value="GO_Central"/>
</dbReference>
<dbReference type="GO" id="GO:0034198">
    <property type="term" value="P:cellular response to amino acid starvation"/>
    <property type="evidence" value="ECO:0000314"/>
    <property type="project" value="UniProtKB"/>
</dbReference>
<dbReference type="GO" id="GO:0002181">
    <property type="term" value="P:cytoplasmic translation"/>
    <property type="evidence" value="ECO:0000303"/>
    <property type="project" value="SGD"/>
</dbReference>
<dbReference type="GO" id="GO:0045860">
    <property type="term" value="P:positive regulation of protein kinase activity"/>
    <property type="evidence" value="ECO:0000314"/>
    <property type="project" value="UniProtKB"/>
</dbReference>
<dbReference type="GO" id="GO:0000054">
    <property type="term" value="P:ribosomal subunit export from nucleus"/>
    <property type="evidence" value="ECO:0000316"/>
    <property type="project" value="SGD"/>
</dbReference>
<dbReference type="FunFam" id="1.10.10.10:FF:000025">
    <property type="entry name" value="40S ribosomal protein S10"/>
    <property type="match status" value="1"/>
</dbReference>
<dbReference type="Gene3D" id="1.10.10.10">
    <property type="entry name" value="Winged helix-like DNA-binding domain superfamily/Winged helix DNA-binding domain"/>
    <property type="match status" value="1"/>
</dbReference>
<dbReference type="InterPro" id="IPR005326">
    <property type="entry name" value="Plectin_eS10_N"/>
</dbReference>
<dbReference type="InterPro" id="IPR037447">
    <property type="entry name" value="Ribosomal_eS10"/>
</dbReference>
<dbReference type="InterPro" id="IPR036388">
    <property type="entry name" value="WH-like_DNA-bd_sf"/>
</dbReference>
<dbReference type="InterPro" id="IPR036390">
    <property type="entry name" value="WH_DNA-bd_sf"/>
</dbReference>
<dbReference type="PANTHER" id="PTHR12146">
    <property type="entry name" value="40S RIBOSOMAL PROTEIN S10"/>
    <property type="match status" value="1"/>
</dbReference>
<dbReference type="PANTHER" id="PTHR12146:SF0">
    <property type="entry name" value="RIBOSOMAL PROTEIN S10"/>
    <property type="match status" value="1"/>
</dbReference>
<dbReference type="Pfam" id="PF03501">
    <property type="entry name" value="S10_plectin"/>
    <property type="match status" value="1"/>
</dbReference>
<dbReference type="SUPFAM" id="SSF46785">
    <property type="entry name" value="Winged helix' DNA-binding domain"/>
    <property type="match status" value="1"/>
</dbReference>
<name>RS10A_YEAST</name>